<organism>
    <name type="scientific">Cavia porcellus</name>
    <name type="common">Guinea pig</name>
    <dbReference type="NCBI Taxonomy" id="10141"/>
    <lineage>
        <taxon>Eukaryota</taxon>
        <taxon>Metazoa</taxon>
        <taxon>Chordata</taxon>
        <taxon>Craniata</taxon>
        <taxon>Vertebrata</taxon>
        <taxon>Euteleostomi</taxon>
        <taxon>Mammalia</taxon>
        <taxon>Eutheria</taxon>
        <taxon>Euarchontoglires</taxon>
        <taxon>Glires</taxon>
        <taxon>Rodentia</taxon>
        <taxon>Hystricomorpha</taxon>
        <taxon>Caviidae</taxon>
        <taxon>Cavia</taxon>
    </lineage>
</organism>
<evidence type="ECO:0000250" key="1">
    <source>
        <dbReference type="UniProtKB" id="P05555"/>
    </source>
</evidence>
<evidence type="ECO:0000250" key="2">
    <source>
        <dbReference type="UniProtKB" id="P11215"/>
    </source>
</evidence>
<evidence type="ECO:0000255" key="3"/>
<evidence type="ECO:0000305" key="4"/>
<keyword id="KW-0130">Cell adhesion</keyword>
<keyword id="KW-1003">Cell membrane</keyword>
<keyword id="KW-0325">Glycoprotein</keyword>
<keyword id="KW-0401">Integrin</keyword>
<keyword id="KW-0472">Membrane</keyword>
<keyword id="KW-0675">Receptor</keyword>
<keyword id="KW-1185">Reference proteome</keyword>
<accession>P11578</accession>
<comment type="function">
    <text evidence="1 2">Integrin ITGAM/ITGB2 is implicated in various adhesive interactions of monocytes, macrophages and granulocytes as well as in mediating the uptake of complement-coated particles. It is identical with CR-3, the receptor for the iC3b fragment of the third complement component. It probably recognizes the R-G-D peptide in C3b. Integrin ITGAM/ITGB2 is also a receptor for fibrinogen, factor X and ICAM1. It recognizes P1 and P2 peptides of fibrinogen gamma chain. Regulates neutrophil migration. In association with beta subunit ITGB2/CD18, required for CD177-PRTN3-mediated activation of TNF primed neutrophils. May regulate phagocytosis-induced apoptosis in extravasated neutrophils. May play a role in mast cell development. Required with TYROBP/DAP12 in microglia to control production of microglial superoxide ions which promote the neuronal apoptosis that occurs during brain development.</text>
</comment>
<comment type="subunit">
    <text evidence="2">Heterodimer of an alpha and a beta chain. ITGAM associates with ITGB2. Found in a complex with CD177 and ITGB2/CD18. Interacts with JAM3. Interacts with THBD (By similarity). Interacts with TMEM268; this interaction inhibits ITGAM degradation via the endosome-lysosome pathway (By similarity).</text>
</comment>
<comment type="subcellular location">
    <subcellularLocation>
        <location evidence="2">Cell membrane</location>
        <topology evidence="2">Single-pass type I membrane protein</topology>
    </subcellularLocation>
    <subcellularLocation>
        <location evidence="2">Membrane raft</location>
        <topology evidence="2">Single-pass type I membrane protein</topology>
    </subcellularLocation>
</comment>
<comment type="domain">
    <text>The integrin I-domain (insert) is a VWFA domain. Integrins with I-domains do not undergo protease cleavage.</text>
</comment>
<comment type="similarity">
    <text evidence="4">Belongs to the integrin alpha chain family.</text>
</comment>
<reference key="1">
    <citation type="journal article" date="1988" name="Proc. Natl. Acad. Sci. U.S.A.">
        <title>Molecular cloning of the alpha subunit of human and guinea pig leukocyte adhesion glycoprotein Mo1: chromosomal localization and homology to the alpha subunits of integrins.</title>
        <authorList>
            <person name="Arnaout M.A."/>
            <person name="Remold-O'Donnell E."/>
            <person name="Pierce M.W."/>
            <person name="Harris P."/>
            <person name="Tenen D.G."/>
        </authorList>
    </citation>
    <scope>NUCLEOTIDE SEQUENCE [MRNA]</scope>
</reference>
<proteinExistence type="evidence at transcript level"/>
<sequence>QLELPVKYAVYLIVTSGEASTTYLNFTTSEKTIQTMKHQYKFTNLGKRSLPISVVFWVPVRLNNEIVWDRPQVTFSPNLSSACNTEERSPPHSDFLAELEKTHVLNCSIAVCQRIACDIPYFNIQE</sequence>
<protein>
    <recommendedName>
        <fullName>Integrin alpha-M</fullName>
    </recommendedName>
    <alternativeName>
        <fullName>CD11 antigen-like family member B</fullName>
    </alternativeName>
    <alternativeName>
        <fullName>CR-3 alpha chain</fullName>
    </alternativeName>
    <alternativeName>
        <fullName>Cell surface glycoprotein MAC-1 subunit alpha</fullName>
    </alternativeName>
    <alternativeName>
        <fullName>Leukocyte adhesion receptor MO1</fullName>
    </alternativeName>
    <cdAntigenName>CD11b</cdAntigenName>
</protein>
<feature type="chain" id="PRO_0000174217" description="Integrin alpha-M">
    <location>
        <begin position="1" status="less than"/>
        <end position="126" status="greater than"/>
    </location>
</feature>
<feature type="glycosylation site" description="N-linked (GlcNAc...) asparagine" evidence="3">
    <location>
        <position position="25"/>
    </location>
</feature>
<feature type="glycosylation site" description="N-linked (GlcNAc...) asparagine" evidence="3">
    <location>
        <position position="78"/>
    </location>
</feature>
<feature type="glycosylation site" description="N-linked (GlcNAc...) asparagine" evidence="3">
    <location>
        <position position="106"/>
    </location>
</feature>
<feature type="non-terminal residue">
    <location>
        <position position="1"/>
    </location>
</feature>
<feature type="non-terminal residue">
    <location>
        <position position="126"/>
    </location>
</feature>
<name>ITAM_CAVPO</name>
<gene>
    <name type="primary">ITGAM</name>
</gene>
<dbReference type="EMBL" id="M19663">
    <property type="protein sequence ID" value="AAA37045.1"/>
    <property type="molecule type" value="mRNA"/>
</dbReference>
<dbReference type="PIR" id="B30892">
    <property type="entry name" value="B30892"/>
</dbReference>
<dbReference type="SMR" id="P11578"/>
<dbReference type="STRING" id="10141.ENSCPOP00000026019"/>
<dbReference type="GlyCosmos" id="P11578">
    <property type="glycosylation" value="3 sites, No reported glycans"/>
</dbReference>
<dbReference type="eggNOG" id="KOG3637">
    <property type="taxonomic scope" value="Eukaryota"/>
</dbReference>
<dbReference type="HOGENOM" id="CLU_1986516_0_0_1"/>
<dbReference type="InParanoid" id="P11578"/>
<dbReference type="Proteomes" id="UP000005447">
    <property type="component" value="Unassembled WGS sequence"/>
</dbReference>
<dbReference type="GO" id="GO:0045121">
    <property type="term" value="C:membrane raft"/>
    <property type="evidence" value="ECO:0007669"/>
    <property type="project" value="UniProtKB-SubCell"/>
</dbReference>
<dbReference type="GO" id="GO:0005886">
    <property type="term" value="C:plasma membrane"/>
    <property type="evidence" value="ECO:0007669"/>
    <property type="project" value="UniProtKB-SubCell"/>
</dbReference>
<dbReference type="GO" id="GO:0007155">
    <property type="term" value="P:cell adhesion"/>
    <property type="evidence" value="ECO:0007669"/>
    <property type="project" value="UniProtKB-KW"/>
</dbReference>
<dbReference type="GO" id="GO:0007229">
    <property type="term" value="P:integrin-mediated signaling pathway"/>
    <property type="evidence" value="ECO:0007669"/>
    <property type="project" value="UniProtKB-KW"/>
</dbReference>
<dbReference type="GO" id="GO:1904151">
    <property type="term" value="P:positive regulation of microglial cell mediated cytotoxicity"/>
    <property type="evidence" value="ECO:0000250"/>
    <property type="project" value="UniProtKB"/>
</dbReference>
<dbReference type="Gene3D" id="2.60.40.1530">
    <property type="entry name" value="ntegrin, alpha v. Chain A, domain 4"/>
    <property type="match status" value="1"/>
</dbReference>
<dbReference type="InterPro" id="IPR032695">
    <property type="entry name" value="Integrin_dom_sf"/>
</dbReference>
<dbReference type="InterPro" id="IPR048633">
    <property type="entry name" value="ITGAX-like_Ig_3"/>
</dbReference>
<dbReference type="Pfam" id="PF21520">
    <property type="entry name" value="ITGAX-like_Ig_3"/>
    <property type="match status" value="1"/>
</dbReference>
<dbReference type="SUPFAM" id="SSF69179">
    <property type="entry name" value="Integrin domains"/>
    <property type="match status" value="1"/>
</dbReference>